<organism>
    <name type="scientific">Oryza sativa subsp. japonica</name>
    <name type="common">Rice</name>
    <dbReference type="NCBI Taxonomy" id="39947"/>
    <lineage>
        <taxon>Eukaryota</taxon>
        <taxon>Viridiplantae</taxon>
        <taxon>Streptophyta</taxon>
        <taxon>Embryophyta</taxon>
        <taxon>Tracheophyta</taxon>
        <taxon>Spermatophyta</taxon>
        <taxon>Magnoliopsida</taxon>
        <taxon>Liliopsida</taxon>
        <taxon>Poales</taxon>
        <taxon>Poaceae</taxon>
        <taxon>BOP clade</taxon>
        <taxon>Oryzoideae</taxon>
        <taxon>Oryzeae</taxon>
        <taxon>Oryzinae</taxon>
        <taxon>Oryza</taxon>
        <taxon>Oryza sativa</taxon>
    </lineage>
</organism>
<keyword id="KW-0052">Apoplast</keyword>
<keyword id="KW-1015">Disulfide bond</keyword>
<keyword id="KW-0325">Glycoprotein</keyword>
<keyword id="KW-0464">Manganese</keyword>
<keyword id="KW-0479">Metal-binding</keyword>
<keyword id="KW-1185">Reference proteome</keyword>
<keyword id="KW-0964">Secreted</keyword>
<keyword id="KW-0732">Signal</keyword>
<reference key="1">
    <citation type="online journal article" date="1998" name="Plant Gene Register">
        <title>The rice genome expresses at least six different genes for oxalate oxidase/germin-like proteins.</title>
        <authorList>
            <person name="Membre N."/>
            <person name="Bernier F."/>
        </authorList>
        <locator>PGR98-021</locator>
    </citation>
    <scope>NUCLEOTIDE SEQUENCE [MRNA]</scope>
    <source>
        <strain>cv. Nipponbare</strain>
    </source>
</reference>
<reference key="2">
    <citation type="journal article" date="2005" name="Nature">
        <title>The map-based sequence of the rice genome.</title>
        <authorList>
            <consortium name="International rice genome sequencing project (IRGSP)"/>
        </authorList>
    </citation>
    <scope>NUCLEOTIDE SEQUENCE [LARGE SCALE GENOMIC DNA]</scope>
    <source>
        <strain>cv. Nipponbare</strain>
    </source>
</reference>
<reference key="3">
    <citation type="journal article" date="2008" name="Nucleic Acids Res.">
        <title>The rice annotation project database (RAP-DB): 2008 update.</title>
        <authorList>
            <consortium name="The rice annotation project (RAP)"/>
        </authorList>
    </citation>
    <scope>GENOME REANNOTATION</scope>
    <source>
        <strain>cv. Nipponbare</strain>
    </source>
</reference>
<reference key="4">
    <citation type="journal article" date="2013" name="Rice">
        <title>Improvement of the Oryza sativa Nipponbare reference genome using next generation sequence and optical map data.</title>
        <authorList>
            <person name="Kawahara Y."/>
            <person name="de la Bastide M."/>
            <person name="Hamilton J.P."/>
            <person name="Kanamori H."/>
            <person name="McCombie W.R."/>
            <person name="Ouyang S."/>
            <person name="Schwartz D.C."/>
            <person name="Tanaka T."/>
            <person name="Wu J."/>
            <person name="Zhou S."/>
            <person name="Childs K.L."/>
            <person name="Davidson R.M."/>
            <person name="Lin H."/>
            <person name="Quesada-Ocampo L."/>
            <person name="Vaillancourt B."/>
            <person name="Sakai H."/>
            <person name="Lee S.S."/>
            <person name="Kim J."/>
            <person name="Numa H."/>
            <person name="Itoh T."/>
            <person name="Buell C.R."/>
            <person name="Matsumoto T."/>
        </authorList>
    </citation>
    <scope>GENOME REANNOTATION</scope>
    <source>
        <strain>cv. Nipponbare</strain>
    </source>
</reference>
<reference key="5">
    <citation type="journal article" date="2005" name="PLoS Biol.">
        <title>The genomes of Oryza sativa: a history of duplications.</title>
        <authorList>
            <person name="Yu J."/>
            <person name="Wang J."/>
            <person name="Lin W."/>
            <person name="Li S."/>
            <person name="Li H."/>
            <person name="Zhou J."/>
            <person name="Ni P."/>
            <person name="Dong W."/>
            <person name="Hu S."/>
            <person name="Zeng C."/>
            <person name="Zhang J."/>
            <person name="Zhang Y."/>
            <person name="Li R."/>
            <person name="Xu Z."/>
            <person name="Li S."/>
            <person name="Li X."/>
            <person name="Zheng H."/>
            <person name="Cong L."/>
            <person name="Lin L."/>
            <person name="Yin J."/>
            <person name="Geng J."/>
            <person name="Li G."/>
            <person name="Shi J."/>
            <person name="Liu J."/>
            <person name="Lv H."/>
            <person name="Li J."/>
            <person name="Wang J."/>
            <person name="Deng Y."/>
            <person name="Ran L."/>
            <person name="Shi X."/>
            <person name="Wang X."/>
            <person name="Wu Q."/>
            <person name="Li C."/>
            <person name="Ren X."/>
            <person name="Wang J."/>
            <person name="Wang X."/>
            <person name="Li D."/>
            <person name="Liu D."/>
            <person name="Zhang X."/>
            <person name="Ji Z."/>
            <person name="Zhao W."/>
            <person name="Sun Y."/>
            <person name="Zhang Z."/>
            <person name="Bao J."/>
            <person name="Han Y."/>
            <person name="Dong L."/>
            <person name="Ji J."/>
            <person name="Chen P."/>
            <person name="Wu S."/>
            <person name="Liu J."/>
            <person name="Xiao Y."/>
            <person name="Bu D."/>
            <person name="Tan J."/>
            <person name="Yang L."/>
            <person name="Ye C."/>
            <person name="Zhang J."/>
            <person name="Xu J."/>
            <person name="Zhou Y."/>
            <person name="Yu Y."/>
            <person name="Zhang B."/>
            <person name="Zhuang S."/>
            <person name="Wei H."/>
            <person name="Liu B."/>
            <person name="Lei M."/>
            <person name="Yu H."/>
            <person name="Li Y."/>
            <person name="Xu H."/>
            <person name="Wei S."/>
            <person name="He X."/>
            <person name="Fang L."/>
            <person name="Zhang Z."/>
            <person name="Zhang Y."/>
            <person name="Huang X."/>
            <person name="Su Z."/>
            <person name="Tong W."/>
            <person name="Li J."/>
            <person name="Tong Z."/>
            <person name="Li S."/>
            <person name="Ye J."/>
            <person name="Wang L."/>
            <person name="Fang L."/>
            <person name="Lei T."/>
            <person name="Chen C.-S."/>
            <person name="Chen H.-C."/>
            <person name="Xu Z."/>
            <person name="Li H."/>
            <person name="Huang H."/>
            <person name="Zhang F."/>
            <person name="Xu H."/>
            <person name="Li N."/>
            <person name="Zhao C."/>
            <person name="Li S."/>
            <person name="Dong L."/>
            <person name="Huang Y."/>
            <person name="Li L."/>
            <person name="Xi Y."/>
            <person name="Qi Q."/>
            <person name="Li W."/>
            <person name="Zhang B."/>
            <person name="Hu W."/>
            <person name="Zhang Y."/>
            <person name="Tian X."/>
            <person name="Jiao Y."/>
            <person name="Liang X."/>
            <person name="Jin J."/>
            <person name="Gao L."/>
            <person name="Zheng W."/>
            <person name="Hao B."/>
            <person name="Liu S.-M."/>
            <person name="Wang W."/>
            <person name="Yuan L."/>
            <person name="Cao M."/>
            <person name="McDermott J."/>
            <person name="Samudrala R."/>
            <person name="Wang J."/>
            <person name="Wong G.K.-S."/>
            <person name="Yang H."/>
        </authorList>
    </citation>
    <scope>NUCLEOTIDE SEQUENCE [LARGE SCALE GENOMIC DNA]</scope>
    <source>
        <strain>cv. Nipponbare</strain>
    </source>
</reference>
<reference key="6">
    <citation type="journal article" date="2003" name="Science">
        <title>Collection, mapping, and annotation of over 28,000 cDNA clones from japonica rice.</title>
        <authorList>
            <consortium name="The rice full-length cDNA consortium"/>
        </authorList>
    </citation>
    <scope>NUCLEOTIDE SEQUENCE [LARGE SCALE MRNA]</scope>
    <source>
        <strain>cv. Nipponbare</strain>
    </source>
</reference>
<reference key="7">
    <citation type="journal article" date="2009" name="Plant Physiol.">
        <title>A germin-like protein gene family functions as a complex quantitative trait locus conferring broad-spectrum disease resistance in rice.</title>
        <authorList>
            <person name="Manosalva P.M."/>
            <person name="Davidson R.M."/>
            <person name="Liu B."/>
            <person name="Zhu X."/>
            <person name="Hulbert S.H."/>
            <person name="Leung H."/>
            <person name="Leach J.E."/>
        </authorList>
    </citation>
    <scope>FUNCTION</scope>
</reference>
<protein>
    <recommendedName>
        <fullName>Germin-like protein 8-3</fullName>
    </recommendedName>
    <alternativeName>
        <fullName>Germin-like protein 2</fullName>
        <shortName>OsGER2</shortName>
    </alternativeName>
</protein>
<feature type="signal peptide" evidence="2">
    <location>
        <begin position="1"/>
        <end position="23"/>
    </location>
</feature>
<feature type="chain" id="PRO_0000365515" description="Germin-like protein 8-3">
    <location>
        <begin position="24"/>
        <end position="225"/>
    </location>
</feature>
<feature type="domain" description="Cupin type-1" evidence="2">
    <location>
        <begin position="60"/>
        <end position="213"/>
    </location>
</feature>
<feature type="binding site" evidence="1">
    <location>
        <position position="111"/>
    </location>
    <ligand>
        <name>Mn(2+)</name>
        <dbReference type="ChEBI" id="CHEBI:29035"/>
    </ligand>
</feature>
<feature type="binding site" evidence="1">
    <location>
        <position position="113"/>
    </location>
    <ligand>
        <name>Mn(2+)</name>
        <dbReference type="ChEBI" id="CHEBI:29035"/>
    </ligand>
</feature>
<feature type="binding site" evidence="1">
    <location>
        <position position="118"/>
    </location>
    <ligand>
        <name>Mn(2+)</name>
        <dbReference type="ChEBI" id="CHEBI:29035"/>
    </ligand>
</feature>
<feature type="binding site" evidence="1">
    <location>
        <position position="158"/>
    </location>
    <ligand>
        <name>Mn(2+)</name>
        <dbReference type="ChEBI" id="CHEBI:29035"/>
    </ligand>
</feature>
<feature type="glycosylation site" description="N-linked (GlcNAc...) asparagine" evidence="2">
    <location>
        <position position="53"/>
    </location>
</feature>
<feature type="glycosylation site" description="N-linked (GlcNAc...) asparagine" evidence="2">
    <location>
        <position position="78"/>
    </location>
</feature>
<feature type="disulfide bond" evidence="1">
    <location>
        <begin position="33"/>
        <end position="48"/>
    </location>
</feature>
<name>GL83_ORYSJ</name>
<accession>Q6YZZ7</accession>
<accession>A0A0P0XCI3</accession>
<accession>O48998</accession>
<dbReference type="EMBL" id="AF032972">
    <property type="protein sequence ID" value="AAC04833.1"/>
    <property type="molecule type" value="mRNA"/>
</dbReference>
<dbReference type="EMBL" id="AP005505">
    <property type="protein sequence ID" value="BAD05730.1"/>
    <property type="molecule type" value="Genomic_DNA"/>
</dbReference>
<dbReference type="EMBL" id="AP005531">
    <property type="protein sequence ID" value="BAD05769.1"/>
    <property type="molecule type" value="Genomic_DNA"/>
</dbReference>
<dbReference type="EMBL" id="AP008214">
    <property type="protein sequence ID" value="BAF23071.1"/>
    <property type="molecule type" value="Genomic_DNA"/>
</dbReference>
<dbReference type="EMBL" id="AP014964">
    <property type="protein sequence ID" value="BAT04150.1"/>
    <property type="molecule type" value="Genomic_DNA"/>
</dbReference>
<dbReference type="EMBL" id="CM000145">
    <property type="protein sequence ID" value="EAZ41754.1"/>
    <property type="molecule type" value="Genomic_DNA"/>
</dbReference>
<dbReference type="EMBL" id="AK059781">
    <property type="protein sequence ID" value="BAG87123.1"/>
    <property type="molecule type" value="mRNA"/>
</dbReference>
<dbReference type="PIR" id="T02241">
    <property type="entry name" value="T02241"/>
</dbReference>
<dbReference type="RefSeq" id="XP_015650201.1">
    <property type="nucleotide sequence ID" value="XM_015794715.1"/>
</dbReference>
<dbReference type="SMR" id="Q6YZZ7"/>
<dbReference type="FunCoup" id="Q6YZZ7">
    <property type="interactions" value="42"/>
</dbReference>
<dbReference type="STRING" id="39947.Q6YZZ7"/>
<dbReference type="GlyCosmos" id="Q6YZZ7">
    <property type="glycosylation" value="2 sites, No reported glycans"/>
</dbReference>
<dbReference type="PaxDb" id="39947-Q6YZZ7"/>
<dbReference type="EnsemblPlants" id="Os08t0189200-01">
    <property type="protein sequence ID" value="Os08t0189200-01"/>
    <property type="gene ID" value="Os08g0189200"/>
</dbReference>
<dbReference type="Gramene" id="Os08t0189200-01">
    <property type="protein sequence ID" value="Os08t0189200-01"/>
    <property type="gene ID" value="Os08g0189200"/>
</dbReference>
<dbReference type="KEGG" id="dosa:Os08g0189200"/>
<dbReference type="eggNOG" id="ENOG502QQ4A">
    <property type="taxonomic scope" value="Eukaryota"/>
</dbReference>
<dbReference type="HOGENOM" id="CLU_015790_0_0_1"/>
<dbReference type="InParanoid" id="Q6YZZ7"/>
<dbReference type="OMA" id="CKDPMNV"/>
<dbReference type="OrthoDB" id="1921208at2759"/>
<dbReference type="Proteomes" id="UP000000763">
    <property type="component" value="Chromosome 8"/>
</dbReference>
<dbReference type="Proteomes" id="UP000007752">
    <property type="component" value="Chromosome 8"/>
</dbReference>
<dbReference type="Proteomes" id="UP000059680">
    <property type="component" value="Chromosome 8"/>
</dbReference>
<dbReference type="GO" id="GO:0048046">
    <property type="term" value="C:apoplast"/>
    <property type="evidence" value="ECO:0007669"/>
    <property type="project" value="UniProtKB-SubCell"/>
</dbReference>
<dbReference type="GO" id="GO:0030145">
    <property type="term" value="F:manganese ion binding"/>
    <property type="evidence" value="ECO:0007669"/>
    <property type="project" value="InterPro"/>
</dbReference>
<dbReference type="CDD" id="cd02241">
    <property type="entry name" value="cupin_OxOx"/>
    <property type="match status" value="1"/>
</dbReference>
<dbReference type="FunFam" id="2.60.120.10:FF:000005">
    <property type="entry name" value="Germin-like protein subfamily 1 member 8"/>
    <property type="match status" value="1"/>
</dbReference>
<dbReference type="Gene3D" id="2.60.120.10">
    <property type="entry name" value="Jelly Rolls"/>
    <property type="match status" value="1"/>
</dbReference>
<dbReference type="InterPro" id="IPR006045">
    <property type="entry name" value="Cupin_1"/>
</dbReference>
<dbReference type="InterPro" id="IPR001929">
    <property type="entry name" value="Germin"/>
</dbReference>
<dbReference type="InterPro" id="IPR019780">
    <property type="entry name" value="Germin_Mn-BS"/>
</dbReference>
<dbReference type="InterPro" id="IPR014710">
    <property type="entry name" value="RmlC-like_jellyroll"/>
</dbReference>
<dbReference type="InterPro" id="IPR011051">
    <property type="entry name" value="RmlC_Cupin_sf"/>
</dbReference>
<dbReference type="PANTHER" id="PTHR31238">
    <property type="entry name" value="GERMIN-LIKE PROTEIN SUBFAMILY 3 MEMBER 3"/>
    <property type="match status" value="1"/>
</dbReference>
<dbReference type="Pfam" id="PF00190">
    <property type="entry name" value="Cupin_1"/>
    <property type="match status" value="1"/>
</dbReference>
<dbReference type="PRINTS" id="PR00325">
    <property type="entry name" value="GERMIN"/>
</dbReference>
<dbReference type="SMART" id="SM00835">
    <property type="entry name" value="Cupin_1"/>
    <property type="match status" value="1"/>
</dbReference>
<dbReference type="SUPFAM" id="SSF51182">
    <property type="entry name" value="RmlC-like cupins"/>
    <property type="match status" value="1"/>
</dbReference>
<dbReference type="PROSITE" id="PS00725">
    <property type="entry name" value="GERMIN"/>
    <property type="match status" value="1"/>
</dbReference>
<sequence>MASSSLFLLASLLVLASWQQAIAFDPSPLQDFCVADMASPVRVNGFPCKNPMNVTSDDFFNAAKFDMPRNTMNKVGSNVTNLNVINFPGLNTLGISLARIDYAPMGVNPPHVHPRATELLTVLEGTLYVGFVTSNPNRLFSKVVHKGDVFVFPKAMIHFQMNLDHNKPAVAQSALSSQNPGVITIASAIFGSTPPISDDVLVKAFQVEKKVIDWLKSQFSENNHY</sequence>
<comment type="function">
    <text evidence="3">Plays a role in broad-spectrum disease resistance. Probably has no oxalate oxidase activity even if the active site is conserved.</text>
</comment>
<comment type="subunit">
    <text evidence="1">Oligomer (believed to be a pentamer but probably hexamer).</text>
</comment>
<comment type="subcellular location">
    <subcellularLocation>
        <location evidence="1">Secreted</location>
        <location evidence="1">Extracellular space</location>
        <location evidence="1">Apoplast</location>
    </subcellularLocation>
</comment>
<comment type="miscellaneous">
    <text>Member of the 12 germin-like protein gene cluster located on chromosome 8 in the major-effect quantitative trait loci (QTL) for fungal blast resistance. Partial suppression of the 12 germin-like protein genes increases susceptibility to the fungal pathogens causing rice blast and sheath blight diseases.</text>
</comment>
<comment type="similarity">
    <text evidence="4">Belongs to the germin family.</text>
</comment>
<evidence type="ECO:0000250" key="1"/>
<evidence type="ECO:0000255" key="2"/>
<evidence type="ECO:0000269" key="3">
    <source>
    </source>
</evidence>
<evidence type="ECO:0000305" key="4"/>
<proteinExistence type="evidence at transcript level"/>
<gene>
    <name type="primary">GER2</name>
    <name type="ordered locus">Os08g0189200</name>
    <name type="ordered locus">LOC_Os08g08970</name>
    <name type="ORF">B1099H05.26</name>
    <name type="ORF">OsJ_025237</name>
    <name type="ORF">P0610E02.2</name>
</gene>